<sequence length="98" mass="11056">MHKITPFLIAAVVAVIVLAVWLFKKDNKKETWFSRDLNYGKANSKIWNATVAKGLKGIANENAEIRKMYPYLGYGDFTGAICKGPNNQGCTYYANYTR</sequence>
<organismHost>
    <name type="scientific">Chlorella</name>
    <dbReference type="NCBI Taxonomy" id="3071"/>
</organismHost>
<feature type="chain" id="PRO_0000460579" description="Minor capsid protein P13">
    <location>
        <begin position="1"/>
        <end position="98"/>
    </location>
</feature>
<feature type="region of interest" description="Hydrophobic" evidence="3">
    <location>
        <begin position="3"/>
        <end position="23"/>
    </location>
</feature>
<protein>
    <recommendedName>
        <fullName>Minor capsid protein P13</fullName>
    </recommendedName>
</protein>
<gene>
    <name evidence="5" type="primary">A421R</name>
</gene>
<organism evidence="5 6">
    <name type="scientific">Paramecium bursaria Chlorella virus 1</name>
    <name type="common">PBCV-1</name>
    <dbReference type="NCBI Taxonomy" id="10506"/>
    <lineage>
        <taxon>Viruses</taxon>
        <taxon>Varidnaviria</taxon>
        <taxon>Bamfordvirae</taxon>
        <taxon>Nucleocytoviricota</taxon>
        <taxon>Megaviricetes</taxon>
        <taxon>Algavirales</taxon>
        <taxon>Phycodnaviridae</taxon>
        <taxon>Chlorovirus</taxon>
    </lineage>
</organism>
<keyword id="KW-0002">3D-structure</keyword>
<keyword id="KW-0167">Capsid protein</keyword>
<keyword id="KW-0426">Late protein</keyword>
<keyword id="KW-1185">Reference proteome</keyword>
<keyword id="KW-0946">Virion</keyword>
<comment type="function">
    <text evidence="2">One of the minor capsid proteins that constitute a network internal to the major capsid proteins and outside the lipid membrane (PubMed:30674888). The minor capsid protein P13 does not serve a cross-linking function between neighboring capsomers, it may play a role in the viral capsid assembly (PubMed:30674888).</text>
</comment>
<comment type="subunit">
    <text evidence="2">Interacts with the major capsid protein.</text>
</comment>
<comment type="subcellular location">
    <subcellularLocation>
        <location evidence="2">Virion</location>
    </subcellularLocation>
</comment>
<comment type="induction">
    <text evidence="1">Expressed in the late phase of the viral replicative cycle.</text>
</comment>
<comment type="domain">
    <text evidence="4">The hydrophobic region might anchor the protein in the underlying inner membrane.</text>
</comment>
<evidence type="ECO:0000269" key="1">
    <source>
    </source>
</evidence>
<evidence type="ECO:0000269" key="2">
    <source>
    </source>
</evidence>
<evidence type="ECO:0000305" key="3"/>
<evidence type="ECO:0000305" key="4">
    <source>
    </source>
</evidence>
<evidence type="ECO:0000312" key="5">
    <source>
        <dbReference type="EMBL" id="AAC96789.1"/>
    </source>
</evidence>
<evidence type="ECO:0000312" key="6">
    <source>
        <dbReference type="Proteomes" id="UP000000862"/>
    </source>
</evidence>
<evidence type="ECO:0007744" key="7">
    <source>
        <dbReference type="PDB" id="6NCL"/>
    </source>
</evidence>
<evidence type="ECO:0007744" key="8">
    <source>
        <dbReference type="PDB" id="8H2I"/>
    </source>
</evidence>
<accession>Q98473</accession>
<dbReference type="EMBL" id="JF411744">
    <property type="protein sequence ID" value="AAC96789.1"/>
    <property type="molecule type" value="Genomic_DNA"/>
</dbReference>
<dbReference type="PIR" id="T17924">
    <property type="entry name" value="T17924"/>
</dbReference>
<dbReference type="RefSeq" id="NP_048778.1">
    <property type="nucleotide sequence ID" value="NC_000852.5"/>
</dbReference>
<dbReference type="PDB" id="6NCL">
    <property type="method" value="EM"/>
    <property type="resolution" value="3.50 A"/>
    <property type="chains" value="l4=1-98"/>
</dbReference>
<dbReference type="PDB" id="8H2I">
    <property type="method" value="EM"/>
    <property type="resolution" value="3.80 A"/>
    <property type="chains" value="cg=1-98"/>
</dbReference>
<dbReference type="PDBsum" id="6NCL"/>
<dbReference type="PDBsum" id="8H2I"/>
<dbReference type="EMDB" id="EMD-0436"/>
<dbReference type="EMDB" id="EMD-34438"/>
<dbReference type="SMR" id="Q98473"/>
<dbReference type="GeneID" id="918065"/>
<dbReference type="KEGG" id="vg:918065"/>
<dbReference type="OrthoDB" id="23477at10239"/>
<dbReference type="Proteomes" id="UP000000862">
    <property type="component" value="Genome"/>
</dbReference>
<dbReference type="GO" id="GO:0019028">
    <property type="term" value="C:viral capsid"/>
    <property type="evidence" value="ECO:0007669"/>
    <property type="project" value="UniProtKB-KW"/>
</dbReference>
<name>P13_PBCV1</name>
<proteinExistence type="evidence at protein level"/>
<reference key="1">
    <citation type="journal article" date="1996" name="Virology">
        <title>Analysis of 76 kb of the chlorella virus PBCV-1 330-kb genome: map positions 182 to 258.</title>
        <authorList>
            <person name="Kutish G.F."/>
            <person name="Li Y."/>
            <person name="Lu Z."/>
            <person name="Furuta M."/>
            <person name="Rock D.L."/>
            <person name="van Etten J.L."/>
        </authorList>
    </citation>
    <scope>NUCLEOTIDE SEQUENCE [LARGE SCALE GENOMIC DNA]</scope>
</reference>
<reference key="2">
    <citation type="journal article" date="2010" name="J. Virol.">
        <title>Microarray analysis of Paramecium bursaria chlorella virus 1 transcription.</title>
        <authorList>
            <person name="Yanai-Balser G.M."/>
            <person name="Duncan G.A."/>
            <person name="Eudy J.D."/>
            <person name="Wang D."/>
            <person name="Li X."/>
            <person name="Agarkova I.V."/>
            <person name="Dunigan D.D."/>
            <person name="Van Etten J.L."/>
        </authorList>
    </citation>
    <scope>INDUCTION</scope>
</reference>
<reference evidence="7" key="3">
    <citation type="journal article" date="2019" name="Nat. Commun.">
        <title>Near-atomic structure of a giant virus.</title>
        <authorList>
            <person name="Fang Q."/>
            <person name="Zhu D."/>
            <person name="Agarkova I."/>
            <person name="Adhikari J."/>
            <person name="Klose T."/>
            <person name="Liu Y."/>
            <person name="Chen Z."/>
            <person name="Sun Y."/>
            <person name="Gross M.L."/>
            <person name="Van Etten J.L."/>
            <person name="Zhang X."/>
            <person name="Rossmann M.G."/>
        </authorList>
    </citation>
    <scope>STRUCTURE BY ELECTRON MICROSCOPY (3.50 ANGSTROMS)</scope>
    <scope>FUNCTION</scope>
    <scope>SUBCELLULAR LOCATION</scope>
    <scope>INTERACTION WITH THE MAJOR CAPSID PROTEIN</scope>
</reference>
<reference evidence="8" key="4">
    <citation type="journal article" date="2022" name="Nat. Commun.">
        <title>Near-atomic, non-icosahedrally averaged structure of giant virus Paramecium bursaria chlorella virus 1.</title>
        <authorList>
            <person name="Shao Q."/>
            <person name="Agarkova I.V."/>
            <person name="Noel E.A."/>
            <person name="Dunigan D.D."/>
            <person name="Liu Y."/>
            <person name="Wang A."/>
            <person name="Guo M."/>
            <person name="Xie L."/>
            <person name="Zhao X."/>
            <person name="Rossmann M.G."/>
            <person name="Van Etten J.L."/>
            <person name="Klose T."/>
            <person name="Fang Q."/>
        </authorList>
    </citation>
    <scope>STRUCTURE BY ELECTRON MICROSCOPY (3.80 ANGSTROMS)</scope>
</reference>